<keyword id="KW-0028">Amino-acid biosynthesis</keyword>
<keyword id="KW-0067">ATP-binding</keyword>
<keyword id="KW-0963">Cytoplasm</keyword>
<keyword id="KW-0328">Glycosyltransferase</keyword>
<keyword id="KW-0368">Histidine biosynthesis</keyword>
<keyword id="KW-0460">Magnesium</keyword>
<keyword id="KW-0479">Metal-binding</keyword>
<keyword id="KW-0547">Nucleotide-binding</keyword>
<keyword id="KW-0808">Transferase</keyword>
<protein>
    <recommendedName>
        <fullName evidence="1">ATP phosphoribosyltransferase</fullName>
        <shortName evidence="1">ATP-PRT</shortName>
        <shortName evidence="1">ATP-PRTase</shortName>
        <ecNumber evidence="1">2.4.2.17</ecNumber>
    </recommendedName>
</protein>
<accession>C0ZZV7</accession>
<gene>
    <name evidence="1" type="primary">hisG</name>
    <name type="ordered locus">RER_31840</name>
</gene>
<sequence>MLRVAVPNKGSLSESAAEILSEAGYRRRTDSRDLTVLDPANQVEFFFLRPKDIAIYVGSGELDLGITGRDLAGDSGAPVSERLSLGFGRSSFRYAAPAGKDWAVEDLSGLRIATSYPNLVRKDLTDRGLDATVIRLDGAVEISIQLGVADAIADVVGSGRTLRQHNLVAFGESLCDSEGVLIERTGAPQDDPARNQLIERVRGIVFAQQNLMIDYDCPRTILDDAIKMTPGMESPTLSPLADPDWVAVRAMVPIKGHNQVMDALAELGAKAILASNIRSVRAF</sequence>
<name>HIS1_RHOE4</name>
<proteinExistence type="inferred from homology"/>
<comment type="function">
    <text evidence="1">Catalyzes the condensation of ATP and 5-phosphoribose 1-diphosphate to form N'-(5'-phosphoribosyl)-ATP (PR-ATP). Has a crucial role in the pathway because the rate of histidine biosynthesis seems to be controlled primarily by regulation of HisG enzymatic activity.</text>
</comment>
<comment type="catalytic activity">
    <reaction evidence="1">
        <text>1-(5-phospho-beta-D-ribosyl)-ATP + diphosphate = 5-phospho-alpha-D-ribose 1-diphosphate + ATP</text>
        <dbReference type="Rhea" id="RHEA:18473"/>
        <dbReference type="ChEBI" id="CHEBI:30616"/>
        <dbReference type="ChEBI" id="CHEBI:33019"/>
        <dbReference type="ChEBI" id="CHEBI:58017"/>
        <dbReference type="ChEBI" id="CHEBI:73183"/>
        <dbReference type="EC" id="2.4.2.17"/>
    </reaction>
</comment>
<comment type="cofactor">
    <cofactor evidence="1">
        <name>Mg(2+)</name>
        <dbReference type="ChEBI" id="CHEBI:18420"/>
    </cofactor>
</comment>
<comment type="activity regulation">
    <text evidence="1">Feedback inhibited by histidine.</text>
</comment>
<comment type="pathway">
    <text evidence="1">Amino-acid biosynthesis; L-histidine biosynthesis; L-histidine from 5-phospho-alpha-D-ribose 1-diphosphate: step 1/9.</text>
</comment>
<comment type="subcellular location">
    <subcellularLocation>
        <location evidence="1">Cytoplasm</location>
    </subcellularLocation>
</comment>
<comment type="similarity">
    <text evidence="1">Belongs to the ATP phosphoribosyltransferase family. Long subfamily.</text>
</comment>
<dbReference type="EC" id="2.4.2.17" evidence="1"/>
<dbReference type="EMBL" id="AP008957">
    <property type="protein sequence ID" value="BAH33892.1"/>
    <property type="molecule type" value="Genomic_DNA"/>
</dbReference>
<dbReference type="RefSeq" id="WP_003944905.1">
    <property type="nucleotide sequence ID" value="NC_012490.1"/>
</dbReference>
<dbReference type="SMR" id="C0ZZV7"/>
<dbReference type="GeneID" id="64141018"/>
<dbReference type="KEGG" id="rer:RER_31840"/>
<dbReference type="eggNOG" id="COG0040">
    <property type="taxonomic scope" value="Bacteria"/>
</dbReference>
<dbReference type="HOGENOM" id="CLU_038115_1_1_11"/>
<dbReference type="UniPathway" id="UPA00031">
    <property type="reaction ID" value="UER00006"/>
</dbReference>
<dbReference type="Proteomes" id="UP000002204">
    <property type="component" value="Chromosome"/>
</dbReference>
<dbReference type="GO" id="GO:0005737">
    <property type="term" value="C:cytoplasm"/>
    <property type="evidence" value="ECO:0007669"/>
    <property type="project" value="UniProtKB-SubCell"/>
</dbReference>
<dbReference type="GO" id="GO:0005524">
    <property type="term" value="F:ATP binding"/>
    <property type="evidence" value="ECO:0007669"/>
    <property type="project" value="UniProtKB-KW"/>
</dbReference>
<dbReference type="GO" id="GO:0003879">
    <property type="term" value="F:ATP phosphoribosyltransferase activity"/>
    <property type="evidence" value="ECO:0007669"/>
    <property type="project" value="UniProtKB-UniRule"/>
</dbReference>
<dbReference type="GO" id="GO:0000287">
    <property type="term" value="F:magnesium ion binding"/>
    <property type="evidence" value="ECO:0007669"/>
    <property type="project" value="UniProtKB-UniRule"/>
</dbReference>
<dbReference type="GO" id="GO:0000105">
    <property type="term" value="P:L-histidine biosynthetic process"/>
    <property type="evidence" value="ECO:0007669"/>
    <property type="project" value="UniProtKB-UniRule"/>
</dbReference>
<dbReference type="CDD" id="cd13591">
    <property type="entry name" value="PBP2_HisGL1"/>
    <property type="match status" value="1"/>
</dbReference>
<dbReference type="FunFam" id="3.40.190.10:FF:000136">
    <property type="entry name" value="ATP phosphoribosyltransferase"/>
    <property type="match status" value="1"/>
</dbReference>
<dbReference type="Gene3D" id="3.30.70.120">
    <property type="match status" value="1"/>
</dbReference>
<dbReference type="Gene3D" id="3.40.190.10">
    <property type="entry name" value="Periplasmic binding protein-like II"/>
    <property type="match status" value="2"/>
</dbReference>
<dbReference type="HAMAP" id="MF_00079">
    <property type="entry name" value="HisG_Long"/>
    <property type="match status" value="1"/>
</dbReference>
<dbReference type="InterPro" id="IPR020621">
    <property type="entry name" value="ATP-PRT_HisG_long"/>
</dbReference>
<dbReference type="InterPro" id="IPR013820">
    <property type="entry name" value="ATP_PRibTrfase_cat"/>
</dbReference>
<dbReference type="InterPro" id="IPR018198">
    <property type="entry name" value="ATP_PRibTrfase_CS"/>
</dbReference>
<dbReference type="InterPro" id="IPR001348">
    <property type="entry name" value="ATP_PRibTrfase_HisG"/>
</dbReference>
<dbReference type="InterPro" id="IPR013115">
    <property type="entry name" value="HisG_C"/>
</dbReference>
<dbReference type="InterPro" id="IPR011322">
    <property type="entry name" value="N-reg_PII-like_a/b"/>
</dbReference>
<dbReference type="InterPro" id="IPR015867">
    <property type="entry name" value="N-reg_PII/ATP_PRibTrfase_C"/>
</dbReference>
<dbReference type="NCBIfam" id="TIGR00070">
    <property type="entry name" value="hisG"/>
    <property type="match status" value="1"/>
</dbReference>
<dbReference type="NCBIfam" id="TIGR03455">
    <property type="entry name" value="HisG_C-term"/>
    <property type="match status" value="1"/>
</dbReference>
<dbReference type="PANTHER" id="PTHR21403:SF8">
    <property type="entry name" value="ATP PHOSPHORIBOSYLTRANSFERASE"/>
    <property type="match status" value="1"/>
</dbReference>
<dbReference type="PANTHER" id="PTHR21403">
    <property type="entry name" value="ATP PHOSPHORIBOSYLTRANSFERASE ATP-PRTASE"/>
    <property type="match status" value="1"/>
</dbReference>
<dbReference type="Pfam" id="PF01634">
    <property type="entry name" value="HisG"/>
    <property type="match status" value="1"/>
</dbReference>
<dbReference type="Pfam" id="PF08029">
    <property type="entry name" value="HisG_C"/>
    <property type="match status" value="1"/>
</dbReference>
<dbReference type="SUPFAM" id="SSF54913">
    <property type="entry name" value="GlnB-like"/>
    <property type="match status" value="1"/>
</dbReference>
<dbReference type="SUPFAM" id="SSF53850">
    <property type="entry name" value="Periplasmic binding protein-like II"/>
    <property type="match status" value="1"/>
</dbReference>
<dbReference type="PROSITE" id="PS01316">
    <property type="entry name" value="ATP_P_PHORIBOSYLTR"/>
    <property type="match status" value="1"/>
</dbReference>
<reference key="1">
    <citation type="submission" date="2005-03" db="EMBL/GenBank/DDBJ databases">
        <title>Comparison of the complete genome sequences of Rhodococcus erythropolis PR4 and Rhodococcus opacus B4.</title>
        <authorList>
            <person name="Takarada H."/>
            <person name="Sekine M."/>
            <person name="Hosoyama A."/>
            <person name="Yamada R."/>
            <person name="Fujisawa T."/>
            <person name="Omata S."/>
            <person name="Shimizu A."/>
            <person name="Tsukatani N."/>
            <person name="Tanikawa S."/>
            <person name="Fujita N."/>
            <person name="Harayama S."/>
        </authorList>
    </citation>
    <scope>NUCLEOTIDE SEQUENCE [LARGE SCALE GENOMIC DNA]</scope>
    <source>
        <strain>PR4 / NBRC 100887</strain>
    </source>
</reference>
<evidence type="ECO:0000255" key="1">
    <source>
        <dbReference type="HAMAP-Rule" id="MF_00079"/>
    </source>
</evidence>
<organism>
    <name type="scientific">Rhodococcus erythropolis (strain PR4 / NBRC 100887)</name>
    <dbReference type="NCBI Taxonomy" id="234621"/>
    <lineage>
        <taxon>Bacteria</taxon>
        <taxon>Bacillati</taxon>
        <taxon>Actinomycetota</taxon>
        <taxon>Actinomycetes</taxon>
        <taxon>Mycobacteriales</taxon>
        <taxon>Nocardiaceae</taxon>
        <taxon>Rhodococcus</taxon>
        <taxon>Rhodococcus erythropolis group</taxon>
    </lineage>
</organism>
<feature type="chain" id="PRO_1000202536" description="ATP phosphoribosyltransferase">
    <location>
        <begin position="1"/>
        <end position="283"/>
    </location>
</feature>